<feature type="chain" id="PRO_0000225587" description="DNA-directed RNA polymerase subunit beta'">
    <location>
        <begin position="1"/>
        <end position="1404"/>
    </location>
</feature>
<feature type="region of interest" description="Disordered" evidence="2">
    <location>
        <begin position="1377"/>
        <end position="1404"/>
    </location>
</feature>
<feature type="compositionally biased region" description="Low complexity" evidence="2">
    <location>
        <begin position="1387"/>
        <end position="1404"/>
    </location>
</feature>
<feature type="binding site" evidence="1">
    <location>
        <position position="70"/>
    </location>
    <ligand>
        <name>Zn(2+)</name>
        <dbReference type="ChEBI" id="CHEBI:29105"/>
        <label>1</label>
    </ligand>
</feature>
<feature type="binding site" evidence="1">
    <location>
        <position position="72"/>
    </location>
    <ligand>
        <name>Zn(2+)</name>
        <dbReference type="ChEBI" id="CHEBI:29105"/>
        <label>1</label>
    </ligand>
</feature>
<feature type="binding site" evidence="1">
    <location>
        <position position="85"/>
    </location>
    <ligand>
        <name>Zn(2+)</name>
        <dbReference type="ChEBI" id="CHEBI:29105"/>
        <label>1</label>
    </ligand>
</feature>
<feature type="binding site" evidence="1">
    <location>
        <position position="88"/>
    </location>
    <ligand>
        <name>Zn(2+)</name>
        <dbReference type="ChEBI" id="CHEBI:29105"/>
        <label>1</label>
    </ligand>
</feature>
<feature type="binding site" evidence="1">
    <location>
        <position position="460"/>
    </location>
    <ligand>
        <name>Mg(2+)</name>
        <dbReference type="ChEBI" id="CHEBI:18420"/>
    </ligand>
</feature>
<feature type="binding site" evidence="1">
    <location>
        <position position="462"/>
    </location>
    <ligand>
        <name>Mg(2+)</name>
        <dbReference type="ChEBI" id="CHEBI:18420"/>
    </ligand>
</feature>
<feature type="binding site" evidence="1">
    <location>
        <position position="464"/>
    </location>
    <ligand>
        <name>Mg(2+)</name>
        <dbReference type="ChEBI" id="CHEBI:18420"/>
    </ligand>
</feature>
<feature type="binding site" evidence="1">
    <location>
        <position position="814"/>
    </location>
    <ligand>
        <name>Zn(2+)</name>
        <dbReference type="ChEBI" id="CHEBI:29105"/>
        <label>2</label>
    </ligand>
</feature>
<feature type="binding site" evidence="1">
    <location>
        <position position="889"/>
    </location>
    <ligand>
        <name>Zn(2+)</name>
        <dbReference type="ChEBI" id="CHEBI:29105"/>
        <label>2</label>
    </ligand>
</feature>
<feature type="binding site" evidence="1">
    <location>
        <position position="896"/>
    </location>
    <ligand>
        <name>Zn(2+)</name>
        <dbReference type="ChEBI" id="CHEBI:29105"/>
        <label>2</label>
    </ligand>
</feature>
<feature type="binding site" evidence="1">
    <location>
        <position position="899"/>
    </location>
    <ligand>
        <name>Zn(2+)</name>
        <dbReference type="ChEBI" id="CHEBI:29105"/>
        <label>2</label>
    </ligand>
</feature>
<accession>Q3BWZ0</accession>
<reference key="1">
    <citation type="journal article" date="2005" name="J. Bacteriol.">
        <title>Insights into genome plasticity and pathogenicity of the plant pathogenic Bacterium Xanthomonas campestris pv. vesicatoria revealed by the complete genome sequence.</title>
        <authorList>
            <person name="Thieme F."/>
            <person name="Koebnik R."/>
            <person name="Bekel T."/>
            <person name="Berger C."/>
            <person name="Boch J."/>
            <person name="Buettner D."/>
            <person name="Caldana C."/>
            <person name="Gaigalat L."/>
            <person name="Goesmann A."/>
            <person name="Kay S."/>
            <person name="Kirchner O."/>
            <person name="Lanz C."/>
            <person name="Linke B."/>
            <person name="McHardy A.C."/>
            <person name="Meyer F."/>
            <person name="Mittenhuber G."/>
            <person name="Nies D.H."/>
            <person name="Niesbach-Kloesgen U."/>
            <person name="Patschkowski T."/>
            <person name="Rueckert C."/>
            <person name="Rupp O."/>
            <person name="Schneiker S."/>
            <person name="Schuster S.C."/>
            <person name="Vorhoelter F.J."/>
            <person name="Weber E."/>
            <person name="Puehler A."/>
            <person name="Bonas U."/>
            <person name="Bartels D."/>
            <person name="Kaiser O."/>
        </authorList>
    </citation>
    <scope>NUCLEOTIDE SEQUENCE [LARGE SCALE GENOMIC DNA]</scope>
    <source>
        <strain>85-10</strain>
    </source>
</reference>
<sequence>MKDLLNLFNQQRQTLDFDAIKIALASPDLIRSWSYGEVKKPETINYRTFKPERDGLFCAAIFGPIKDYECLCGKYKRMKHRGVVCEKCGTEVTLAKVRRERMGHIDLASPVAHIWFLKSLPSRIGLMLDMTLRDIERVLYFEAYVVTEPGLTPLERRQLLTEEQYLTARQEYNDDFDAAMGAEAVYELLRTIDLQSEMTRLREEIASTGSETKLKRLTKRIKLIEAFLESGNRPEWMVMTVLPVLPPDLRPLVPLDGGRFATSDLNDLYRRVINRNNRLRRLLELNAPDIIVRNEKRMLQESVDALLDNGRRGRAITGTNKRPLKSLADMIKGKQGRFRQNLLGKRVDYSGRSVITVGPYLKLHQCGLPKKMALELFKPFVFAKLQRRGLATTIKAAKKLVEREEAEVWDILEEVIREHPVLLNRAPTLHRLGIQAFEPVLIEGKAIQLHPLVCTAFNADFDGDQMAVHVPLSLEAQLEARALMMSTNNILSPANGEPIIVPSQDVVLGLYYMSRALENKKGEGMVFANTSEVKRAYDNRVVELHAKVKVRITQVDVEAGGKRSSGTSIVDTTVGRALLSEILPEGLPFQLANTEMTKKNISRLINSSYRLLGLKDTVVFADKLMYTGYAYATRAGVSIGIDDMLIPDEKKGILTEAEAEVLEIQEQYQSGLVTAGERYNKVVDIWSRTSERIAKAMMDTIGTEKVENAKGETIDQKSMNSLYIMADSGARGSQAQIRQLAGMRGLMARPDGSIIETPIKANFREGLNVQEYFNSTHGARKGLADTALKTANSGYLTRRLVDVAQDVVITEIDCGTTEGLIMTPIVEGGDVVEPLRERVLGRVVAEDVYLPGNDEEPIVTRNTLLDEAWVAKLEDASVQSVKVRSTISCESSFGVCARCYGRDLARGHQVNIGEAVGVIAAQSIGEPGTQLTMRTFHIGGAASRAAAVDNITVKTTGSVKFNNLKSVAHASGSLVAVSRSGELSVLDGHGRERERYKLPYGATITAKDGDAVKAGQSVANWDPHNHPIVSEVAGFIRFIDFVDGVTVIEKTDELTGLASREITDPKRRGAQAKELRPIVRIVDAKGNDLTIPNTDLPAQYLLPPRSIVNLQDGAAVGVGDVVAKIPQEASKTRDITGGLPRVADLFEARKPKDPAILAERSGIISFGKDTKGKQRLIIKDTDGSEHEELIPKYRQIIVFEGEHVTKGETVVDGEPSPQDILRLLGVEPLAAYLVKEIQDVYRLQGVKINDKHIEVITRQMLRKVEIVDQGNSKFLNGEQVERQRVIEENARLVKRNELPAKYDPVLLGITKASLATESFISAASFQETTRVLTEAAVRGTRDNLRGLKENVIVGRLIPAGTGLAYHAGRRKASGLTDSEMETLSGKPAAAEPVAAVADAGADEE</sequence>
<keyword id="KW-0240">DNA-directed RNA polymerase</keyword>
<keyword id="KW-0460">Magnesium</keyword>
<keyword id="KW-0479">Metal-binding</keyword>
<keyword id="KW-0548">Nucleotidyltransferase</keyword>
<keyword id="KW-0804">Transcription</keyword>
<keyword id="KW-0808">Transferase</keyword>
<keyword id="KW-0862">Zinc</keyword>
<protein>
    <recommendedName>
        <fullName evidence="1">DNA-directed RNA polymerase subunit beta'</fullName>
        <shortName evidence="1">RNAP subunit beta'</shortName>
        <ecNumber evidence="1">2.7.7.6</ecNumber>
    </recommendedName>
    <alternativeName>
        <fullName evidence="1">RNA polymerase subunit beta'</fullName>
    </alternativeName>
    <alternativeName>
        <fullName evidence="1">Transcriptase subunit beta'</fullName>
    </alternativeName>
</protein>
<name>RPOC_XANE5</name>
<comment type="function">
    <text evidence="1">DNA-dependent RNA polymerase catalyzes the transcription of DNA into RNA using the four ribonucleoside triphosphates as substrates.</text>
</comment>
<comment type="catalytic activity">
    <reaction evidence="1">
        <text>RNA(n) + a ribonucleoside 5'-triphosphate = RNA(n+1) + diphosphate</text>
        <dbReference type="Rhea" id="RHEA:21248"/>
        <dbReference type="Rhea" id="RHEA-COMP:14527"/>
        <dbReference type="Rhea" id="RHEA-COMP:17342"/>
        <dbReference type="ChEBI" id="CHEBI:33019"/>
        <dbReference type="ChEBI" id="CHEBI:61557"/>
        <dbReference type="ChEBI" id="CHEBI:140395"/>
        <dbReference type="EC" id="2.7.7.6"/>
    </reaction>
</comment>
<comment type="cofactor">
    <cofactor evidence="1">
        <name>Mg(2+)</name>
        <dbReference type="ChEBI" id="CHEBI:18420"/>
    </cofactor>
    <text evidence="1">Binds 1 Mg(2+) ion per subunit.</text>
</comment>
<comment type="cofactor">
    <cofactor evidence="1">
        <name>Zn(2+)</name>
        <dbReference type="ChEBI" id="CHEBI:29105"/>
    </cofactor>
    <text evidence="1">Binds 2 Zn(2+) ions per subunit.</text>
</comment>
<comment type="subunit">
    <text evidence="1">The RNAP catalytic core consists of 2 alpha, 1 beta, 1 beta' and 1 omega subunit. When a sigma factor is associated with the core the holoenzyme is formed, which can initiate transcription.</text>
</comment>
<comment type="similarity">
    <text evidence="1">Belongs to the RNA polymerase beta' chain family.</text>
</comment>
<proteinExistence type="inferred from homology"/>
<organism>
    <name type="scientific">Xanthomonas euvesicatoria pv. vesicatoria (strain 85-10)</name>
    <name type="common">Xanthomonas campestris pv. vesicatoria</name>
    <dbReference type="NCBI Taxonomy" id="316273"/>
    <lineage>
        <taxon>Bacteria</taxon>
        <taxon>Pseudomonadati</taxon>
        <taxon>Pseudomonadota</taxon>
        <taxon>Gammaproteobacteria</taxon>
        <taxon>Lysobacterales</taxon>
        <taxon>Lysobacteraceae</taxon>
        <taxon>Xanthomonas</taxon>
    </lineage>
</organism>
<gene>
    <name evidence="1" type="primary">rpoC</name>
    <name type="ordered locus">XCV0992</name>
</gene>
<evidence type="ECO:0000255" key="1">
    <source>
        <dbReference type="HAMAP-Rule" id="MF_01322"/>
    </source>
</evidence>
<evidence type="ECO:0000256" key="2">
    <source>
        <dbReference type="SAM" id="MobiDB-lite"/>
    </source>
</evidence>
<dbReference type="EC" id="2.7.7.6" evidence="1"/>
<dbReference type="EMBL" id="AM039952">
    <property type="protein sequence ID" value="CAJ22623.1"/>
    <property type="molecule type" value="Genomic_DNA"/>
</dbReference>
<dbReference type="RefSeq" id="WP_011346539.1">
    <property type="nucleotide sequence ID" value="NZ_CP017190.1"/>
</dbReference>
<dbReference type="SMR" id="Q3BWZ0"/>
<dbReference type="STRING" id="456327.BJD11_17775"/>
<dbReference type="GeneID" id="97509329"/>
<dbReference type="KEGG" id="xcv:XCV0992"/>
<dbReference type="eggNOG" id="COG0086">
    <property type="taxonomic scope" value="Bacteria"/>
</dbReference>
<dbReference type="HOGENOM" id="CLU_000524_3_1_6"/>
<dbReference type="Proteomes" id="UP000007069">
    <property type="component" value="Chromosome"/>
</dbReference>
<dbReference type="GO" id="GO:0000428">
    <property type="term" value="C:DNA-directed RNA polymerase complex"/>
    <property type="evidence" value="ECO:0007669"/>
    <property type="project" value="UniProtKB-KW"/>
</dbReference>
<dbReference type="GO" id="GO:0003677">
    <property type="term" value="F:DNA binding"/>
    <property type="evidence" value="ECO:0007669"/>
    <property type="project" value="UniProtKB-UniRule"/>
</dbReference>
<dbReference type="GO" id="GO:0003899">
    <property type="term" value="F:DNA-directed RNA polymerase activity"/>
    <property type="evidence" value="ECO:0007669"/>
    <property type="project" value="UniProtKB-UniRule"/>
</dbReference>
<dbReference type="GO" id="GO:0000287">
    <property type="term" value="F:magnesium ion binding"/>
    <property type="evidence" value="ECO:0007669"/>
    <property type="project" value="UniProtKB-UniRule"/>
</dbReference>
<dbReference type="GO" id="GO:0008270">
    <property type="term" value="F:zinc ion binding"/>
    <property type="evidence" value="ECO:0007669"/>
    <property type="project" value="UniProtKB-UniRule"/>
</dbReference>
<dbReference type="GO" id="GO:0006351">
    <property type="term" value="P:DNA-templated transcription"/>
    <property type="evidence" value="ECO:0007669"/>
    <property type="project" value="UniProtKB-UniRule"/>
</dbReference>
<dbReference type="CDD" id="cd02655">
    <property type="entry name" value="RNAP_beta'_C"/>
    <property type="match status" value="1"/>
</dbReference>
<dbReference type="CDD" id="cd01609">
    <property type="entry name" value="RNAP_beta'_N"/>
    <property type="match status" value="1"/>
</dbReference>
<dbReference type="FunFam" id="1.10.132.30:FF:000003">
    <property type="entry name" value="DNA-directed RNA polymerase subunit beta"/>
    <property type="match status" value="1"/>
</dbReference>
<dbReference type="FunFam" id="1.10.150.390:FF:000002">
    <property type="entry name" value="DNA-directed RNA polymerase subunit beta"/>
    <property type="match status" value="1"/>
</dbReference>
<dbReference type="Gene3D" id="1.10.132.30">
    <property type="match status" value="1"/>
</dbReference>
<dbReference type="Gene3D" id="1.10.150.390">
    <property type="match status" value="1"/>
</dbReference>
<dbReference type="Gene3D" id="1.10.1790.20">
    <property type="match status" value="1"/>
</dbReference>
<dbReference type="Gene3D" id="1.10.40.90">
    <property type="match status" value="1"/>
</dbReference>
<dbReference type="Gene3D" id="2.40.40.20">
    <property type="match status" value="1"/>
</dbReference>
<dbReference type="Gene3D" id="2.40.50.100">
    <property type="match status" value="3"/>
</dbReference>
<dbReference type="Gene3D" id="4.10.860.120">
    <property type="entry name" value="RNA polymerase II, clamp domain"/>
    <property type="match status" value="1"/>
</dbReference>
<dbReference type="Gene3D" id="1.10.274.100">
    <property type="entry name" value="RNA polymerase Rpb1, domain 3"/>
    <property type="match status" value="1"/>
</dbReference>
<dbReference type="HAMAP" id="MF_01322">
    <property type="entry name" value="RNApol_bact_RpoC"/>
    <property type="match status" value="1"/>
</dbReference>
<dbReference type="InterPro" id="IPR045867">
    <property type="entry name" value="DNA-dir_RpoC_beta_prime"/>
</dbReference>
<dbReference type="InterPro" id="IPR012754">
    <property type="entry name" value="DNA-dir_RpoC_beta_prime_bact"/>
</dbReference>
<dbReference type="InterPro" id="IPR000722">
    <property type="entry name" value="RNA_pol_asu"/>
</dbReference>
<dbReference type="InterPro" id="IPR006592">
    <property type="entry name" value="RNA_pol_N"/>
</dbReference>
<dbReference type="InterPro" id="IPR007080">
    <property type="entry name" value="RNA_pol_Rpb1_1"/>
</dbReference>
<dbReference type="InterPro" id="IPR007066">
    <property type="entry name" value="RNA_pol_Rpb1_3"/>
</dbReference>
<dbReference type="InterPro" id="IPR042102">
    <property type="entry name" value="RNA_pol_Rpb1_3_sf"/>
</dbReference>
<dbReference type="InterPro" id="IPR007083">
    <property type="entry name" value="RNA_pol_Rpb1_4"/>
</dbReference>
<dbReference type="InterPro" id="IPR007081">
    <property type="entry name" value="RNA_pol_Rpb1_5"/>
</dbReference>
<dbReference type="InterPro" id="IPR044893">
    <property type="entry name" value="RNA_pol_Rpb1_clamp_domain"/>
</dbReference>
<dbReference type="InterPro" id="IPR038120">
    <property type="entry name" value="Rpb1_funnel_sf"/>
</dbReference>
<dbReference type="NCBIfam" id="TIGR02386">
    <property type="entry name" value="rpoC_TIGR"/>
    <property type="match status" value="1"/>
</dbReference>
<dbReference type="PANTHER" id="PTHR19376">
    <property type="entry name" value="DNA-DIRECTED RNA POLYMERASE"/>
    <property type="match status" value="1"/>
</dbReference>
<dbReference type="PANTHER" id="PTHR19376:SF54">
    <property type="entry name" value="DNA-DIRECTED RNA POLYMERASE SUBUNIT BETA"/>
    <property type="match status" value="1"/>
</dbReference>
<dbReference type="Pfam" id="PF04997">
    <property type="entry name" value="RNA_pol_Rpb1_1"/>
    <property type="match status" value="1"/>
</dbReference>
<dbReference type="Pfam" id="PF00623">
    <property type="entry name" value="RNA_pol_Rpb1_2"/>
    <property type="match status" value="2"/>
</dbReference>
<dbReference type="Pfam" id="PF04983">
    <property type="entry name" value="RNA_pol_Rpb1_3"/>
    <property type="match status" value="1"/>
</dbReference>
<dbReference type="Pfam" id="PF05000">
    <property type="entry name" value="RNA_pol_Rpb1_4"/>
    <property type="match status" value="1"/>
</dbReference>
<dbReference type="Pfam" id="PF04998">
    <property type="entry name" value="RNA_pol_Rpb1_5"/>
    <property type="match status" value="1"/>
</dbReference>
<dbReference type="SMART" id="SM00663">
    <property type="entry name" value="RPOLA_N"/>
    <property type="match status" value="1"/>
</dbReference>
<dbReference type="SUPFAM" id="SSF64484">
    <property type="entry name" value="beta and beta-prime subunits of DNA dependent RNA-polymerase"/>
    <property type="match status" value="1"/>
</dbReference>